<organism>
    <name type="scientific">Escherichia coli (strain K12)</name>
    <dbReference type="NCBI Taxonomy" id="83333"/>
    <lineage>
        <taxon>Bacteria</taxon>
        <taxon>Pseudomonadati</taxon>
        <taxon>Pseudomonadota</taxon>
        <taxon>Gammaproteobacteria</taxon>
        <taxon>Enterobacterales</taxon>
        <taxon>Enterobacteriaceae</taxon>
        <taxon>Escherichia</taxon>
    </lineage>
</organism>
<proteinExistence type="evidence at protein level"/>
<feature type="chain" id="PRO_0000166691" description="PFL-like enzyme TdcE">
    <location>
        <begin position="1"/>
        <end position="764"/>
    </location>
</feature>
<feature type="domain" description="PFL" evidence="3">
    <location>
        <begin position="7"/>
        <end position="629"/>
    </location>
</feature>
<feature type="domain" description="Glycine radical" evidence="2">
    <location>
        <begin position="636"/>
        <end position="764"/>
    </location>
</feature>
<feature type="region of interest" description="Disordered" evidence="4">
    <location>
        <begin position="622"/>
        <end position="645"/>
    </location>
</feature>
<feature type="active site" description="S-acetylcysteine intermediate" evidence="1">
    <location>
        <position position="423"/>
    </location>
</feature>
<feature type="active site" description="Cysteine radical intermediate" evidence="1">
    <location>
        <position position="424"/>
    </location>
</feature>
<feature type="modified residue" description="Glycine radical" evidence="2">
    <location>
        <position position="739"/>
    </location>
</feature>
<accession>P42632</accession>
<accession>Q2M994</accession>
<accession>Q6BF44</accession>
<reference key="1">
    <citation type="journal article" date="1997" name="Science">
        <title>The complete genome sequence of Escherichia coli K-12.</title>
        <authorList>
            <person name="Blattner F.R."/>
            <person name="Plunkett G. III"/>
            <person name="Bloch C.A."/>
            <person name="Perna N.T."/>
            <person name="Burland V."/>
            <person name="Riley M."/>
            <person name="Collado-Vides J."/>
            <person name="Glasner J.D."/>
            <person name="Rode C.K."/>
            <person name="Mayhew G.F."/>
            <person name="Gregor J."/>
            <person name="Davis N.W."/>
            <person name="Kirkpatrick H.A."/>
            <person name="Goeden M.A."/>
            <person name="Rose D.J."/>
            <person name="Mau B."/>
            <person name="Shao Y."/>
        </authorList>
    </citation>
    <scope>NUCLEOTIDE SEQUENCE [LARGE SCALE GENOMIC DNA]</scope>
    <source>
        <strain>K12 / MG1655 / ATCC 47076</strain>
    </source>
</reference>
<reference key="2">
    <citation type="journal article" date="2006" name="Nucleic Acids Res.">
        <title>Escherichia coli K-12: a cooperatively developed annotation snapshot -- 2005.</title>
        <authorList>
            <person name="Riley M."/>
            <person name="Abe T."/>
            <person name="Arnaud M.B."/>
            <person name="Berlyn M.K.B."/>
            <person name="Blattner F.R."/>
            <person name="Chaudhuri R.R."/>
            <person name="Glasner J.D."/>
            <person name="Horiuchi T."/>
            <person name="Keseler I.M."/>
            <person name="Kosuge T."/>
            <person name="Mori H."/>
            <person name="Perna N.T."/>
            <person name="Plunkett G. III"/>
            <person name="Rudd K.E."/>
            <person name="Serres M.H."/>
            <person name="Thomas G.H."/>
            <person name="Thomson N.R."/>
            <person name="Wishart D."/>
            <person name="Wanner B.L."/>
        </authorList>
    </citation>
    <scope>SEQUENCE REVISION</scope>
</reference>
<reference key="3">
    <citation type="journal article" date="2006" name="Mol. Syst. Biol.">
        <title>Highly accurate genome sequences of Escherichia coli K-12 strains MG1655 and W3110.</title>
        <authorList>
            <person name="Hayashi K."/>
            <person name="Morooka N."/>
            <person name="Yamamoto Y."/>
            <person name="Fujita K."/>
            <person name="Isono K."/>
            <person name="Choi S."/>
            <person name="Ohtsubo E."/>
            <person name="Baba T."/>
            <person name="Wanner B.L."/>
            <person name="Mori H."/>
            <person name="Horiuchi T."/>
        </authorList>
    </citation>
    <scope>NUCLEOTIDE SEQUENCE [LARGE SCALE GENOMIC DNA]</scope>
    <source>
        <strain>K12 / W3110 / ATCC 27325 / DSM 5911</strain>
    </source>
</reference>
<reference key="4">
    <citation type="journal article" date="1998" name="Mol. Microbiol.">
        <title>Novel keto acid formate-lyase and propionate kinase enzymes are components of an anaerobic pathway in Escherichia coli that degrades L-threonine to propionate.</title>
        <authorList>
            <person name="Hesslinger C."/>
            <person name="Fairhurst S.A."/>
            <person name="Sawers G."/>
        </authorList>
    </citation>
    <scope>FUNCTION AS A LYASE AND IN THE THREONINE CATABOLISM</scope>
    <scope>CATALYTIC ACTIVITY</scope>
    <scope>DISRUPTION PHENOTYPE</scope>
    <scope>INDUCTION</scope>
    <scope>ACTIVITY REGULATION</scope>
    <scope>SUBSTRATE SPECIFICITY</scope>
</reference>
<protein>
    <recommendedName>
        <fullName>PFL-like enzyme TdcE</fullName>
    </recommendedName>
    <alternativeName>
        <fullName>Keto-acid formate acetyltransferase</fullName>
    </alternativeName>
    <alternativeName>
        <fullName>Keto-acid formate-lyase</fullName>
    </alternativeName>
    <alternativeName>
        <fullName>Ketobutyrate formate-lyase</fullName>
        <shortName>KFL</shortName>
        <ecNumber evidence="5">2.3.1.-</ecNumber>
    </alternativeName>
    <alternativeName>
        <fullName>Pyruvate formate-lyase</fullName>
        <shortName>PFL</shortName>
        <ecNumber evidence="5">2.3.1.54</ecNumber>
    </alternativeName>
</protein>
<evidence type="ECO:0000250" key="1"/>
<evidence type="ECO:0000255" key="2">
    <source>
        <dbReference type="PROSITE-ProRule" id="PRU00493"/>
    </source>
</evidence>
<evidence type="ECO:0000255" key="3">
    <source>
        <dbReference type="PROSITE-ProRule" id="PRU00887"/>
    </source>
</evidence>
<evidence type="ECO:0000256" key="4">
    <source>
        <dbReference type="SAM" id="MobiDB-lite"/>
    </source>
</evidence>
<evidence type="ECO:0000269" key="5">
    <source>
    </source>
</evidence>
<evidence type="ECO:0000305" key="6"/>
<name>TDCE_ECOLI</name>
<gene>
    <name type="primary">tdcE</name>
    <name type="synonym">yhaS</name>
    <name type="ordered locus">b3114</name>
    <name type="ordered locus">JW5522</name>
</gene>
<dbReference type="EC" id="2.3.1.-" evidence="5"/>
<dbReference type="EC" id="2.3.1.54" evidence="5"/>
<dbReference type="EMBL" id="U18997">
    <property type="protein sequence ID" value="AAA57918.1"/>
    <property type="status" value="ALT_FRAME"/>
    <property type="molecule type" value="Genomic_DNA"/>
</dbReference>
<dbReference type="EMBL" id="U00096">
    <property type="protein sequence ID" value="AAT48170.1"/>
    <property type="molecule type" value="Genomic_DNA"/>
</dbReference>
<dbReference type="EMBL" id="AP009048">
    <property type="protein sequence ID" value="BAE77162.1"/>
    <property type="molecule type" value="Genomic_DNA"/>
</dbReference>
<dbReference type="PIR" id="G65100">
    <property type="entry name" value="G65100"/>
</dbReference>
<dbReference type="RefSeq" id="WP_000861734.1">
    <property type="nucleotide sequence ID" value="NZ_STEB01000001.1"/>
</dbReference>
<dbReference type="RefSeq" id="YP_026205.1">
    <property type="nucleotide sequence ID" value="NC_000913.3"/>
</dbReference>
<dbReference type="SMR" id="P42632"/>
<dbReference type="BioGRID" id="4262415">
    <property type="interactions" value="24"/>
</dbReference>
<dbReference type="DIP" id="DIP-10972N"/>
<dbReference type="FunCoup" id="P42632">
    <property type="interactions" value="178"/>
</dbReference>
<dbReference type="IntAct" id="P42632">
    <property type="interactions" value="2"/>
</dbReference>
<dbReference type="STRING" id="511145.b3114"/>
<dbReference type="jPOST" id="P42632"/>
<dbReference type="PaxDb" id="511145-b3114"/>
<dbReference type="EnsemblBacteria" id="AAT48170">
    <property type="protein sequence ID" value="AAT48170"/>
    <property type="gene ID" value="b3114"/>
</dbReference>
<dbReference type="GeneID" id="75205077"/>
<dbReference type="GeneID" id="947623"/>
<dbReference type="KEGG" id="ecj:JW5522"/>
<dbReference type="KEGG" id="eco:b3114"/>
<dbReference type="KEGG" id="ecoc:C3026_16985"/>
<dbReference type="PATRIC" id="fig|1411691.4.peg.3616"/>
<dbReference type="EchoBASE" id="EB2612"/>
<dbReference type="eggNOG" id="COG1882">
    <property type="taxonomic scope" value="Bacteria"/>
</dbReference>
<dbReference type="HOGENOM" id="CLU_023898_0_0_6"/>
<dbReference type="InParanoid" id="P42632"/>
<dbReference type="OMA" id="PFKYAKD"/>
<dbReference type="OrthoDB" id="9803969at2"/>
<dbReference type="PhylomeDB" id="P42632"/>
<dbReference type="BioCyc" id="EcoCyc:KETOBUTFORMLY-INACT-MONOMER"/>
<dbReference type="BioCyc" id="MetaCyc:KETOBUTFORMLY-INACT-MONOMER"/>
<dbReference type="UniPathway" id="UPA00052">
    <property type="reaction ID" value="UER00508"/>
</dbReference>
<dbReference type="PRO" id="PR:P42632"/>
<dbReference type="Proteomes" id="UP000000625">
    <property type="component" value="Chromosome"/>
</dbReference>
<dbReference type="GO" id="GO:0005737">
    <property type="term" value="C:cytoplasm"/>
    <property type="evidence" value="ECO:0000314"/>
    <property type="project" value="EcoliWiki"/>
</dbReference>
<dbReference type="GO" id="GO:0005829">
    <property type="term" value="C:cytosol"/>
    <property type="evidence" value="ECO:0000318"/>
    <property type="project" value="GO_Central"/>
</dbReference>
<dbReference type="GO" id="GO:0016020">
    <property type="term" value="C:membrane"/>
    <property type="evidence" value="ECO:0000314"/>
    <property type="project" value="EcoliWiki"/>
</dbReference>
<dbReference type="GO" id="GO:0043875">
    <property type="term" value="F:2-ketobutyrate formate-lyase activity"/>
    <property type="evidence" value="ECO:0000316"/>
    <property type="project" value="EcoliWiki"/>
</dbReference>
<dbReference type="GO" id="GO:0008861">
    <property type="term" value="F:formate C-acetyltransferase activity"/>
    <property type="evidence" value="ECO:0000318"/>
    <property type="project" value="GO_Central"/>
</dbReference>
<dbReference type="GO" id="GO:0005975">
    <property type="term" value="P:carbohydrate metabolic process"/>
    <property type="evidence" value="ECO:0007669"/>
    <property type="project" value="InterPro"/>
</dbReference>
<dbReference type="GO" id="GO:0070689">
    <property type="term" value="P:L-threonine catabolic process to propionate"/>
    <property type="evidence" value="ECO:0000305"/>
    <property type="project" value="EcoliWiki"/>
</dbReference>
<dbReference type="CDD" id="cd01678">
    <property type="entry name" value="PFL1"/>
    <property type="match status" value="1"/>
</dbReference>
<dbReference type="FunFam" id="3.20.70.20:FF:000003">
    <property type="entry name" value="Formate acetyltransferase"/>
    <property type="match status" value="1"/>
</dbReference>
<dbReference type="Gene3D" id="3.20.70.20">
    <property type="match status" value="1"/>
</dbReference>
<dbReference type="InterPro" id="IPR050244">
    <property type="entry name" value="Auton_GlycylRad_Cofactor"/>
</dbReference>
<dbReference type="InterPro" id="IPR005949">
    <property type="entry name" value="Form_AcTrfase"/>
</dbReference>
<dbReference type="InterPro" id="IPR019777">
    <property type="entry name" value="Form_AcTrfase_GR_CS"/>
</dbReference>
<dbReference type="InterPro" id="IPR001150">
    <property type="entry name" value="Gly_radical"/>
</dbReference>
<dbReference type="InterPro" id="IPR004184">
    <property type="entry name" value="PFL_dom"/>
</dbReference>
<dbReference type="NCBIfam" id="TIGR01255">
    <property type="entry name" value="pyr_form_ly_1"/>
    <property type="match status" value="1"/>
</dbReference>
<dbReference type="PANTHER" id="PTHR30191">
    <property type="entry name" value="FORMATE ACETYLTRANSFERASE"/>
    <property type="match status" value="1"/>
</dbReference>
<dbReference type="PANTHER" id="PTHR30191:SF7">
    <property type="entry name" value="PFL-LIKE ENZYME TDCE"/>
    <property type="match status" value="1"/>
</dbReference>
<dbReference type="Pfam" id="PF01228">
    <property type="entry name" value="Gly_radical"/>
    <property type="match status" value="1"/>
</dbReference>
<dbReference type="Pfam" id="PF02901">
    <property type="entry name" value="PFL-like"/>
    <property type="match status" value="1"/>
</dbReference>
<dbReference type="PIRSF" id="PIRSF000379">
    <property type="entry name" value="For_Ac_trans_1"/>
    <property type="match status" value="1"/>
</dbReference>
<dbReference type="SUPFAM" id="SSF51998">
    <property type="entry name" value="PFL-like glycyl radical enzymes"/>
    <property type="match status" value="1"/>
</dbReference>
<dbReference type="PROSITE" id="PS00850">
    <property type="entry name" value="GLY_RADICAL_1"/>
    <property type="match status" value="1"/>
</dbReference>
<dbReference type="PROSITE" id="PS51149">
    <property type="entry name" value="GLY_RADICAL_2"/>
    <property type="match status" value="1"/>
</dbReference>
<dbReference type="PROSITE" id="PS51554">
    <property type="entry name" value="PFL"/>
    <property type="match status" value="1"/>
</dbReference>
<keyword id="KW-0012">Acyltransferase</keyword>
<keyword id="KW-0963">Cytoplasm</keyword>
<keyword id="KW-0556">Organic radical</keyword>
<keyword id="KW-1185">Reference proteome</keyword>
<keyword id="KW-0808">Transferase</keyword>
<sequence>MKVDIDTSDKLYADAWLGFKGTDWKNEINVRDFIQHNYTPYEGDESFLAEATPATTELWEKVMEGIRIENATHAPVDFDTNIATTITAHDAGYINQPLEKIVGLQTDAPLKRALHPFGGINMIKSSFHAYGREMDSEFEYLFTDLRKTHNQGVFDVYSPDMLRCRKSGVLTGLPDGYGRGRIIGDYRRVALYGISYLVRERELQFADLQSRLEKGEDLEATIRLREELAEHRHALLQIQEMAAKYGFDISRPAQNAQEAVQWLYFAYLAAVKSQNGGAMSLGRTASFLDIYIERDFKAGVLNEQQAQELIDHFIMKIRMVRFLRTPEFDSLFSGDPIWATEVIGGMGLDGRTLVTKNSFRYLHTLHTMGPAPEPNLTILWSEELPIAFKKYAAQVSIVTSSLQYENDDLMRTDFNSDDYAIACCVSPMVIGKQMQFFGARANLAKTLLYAINGGVDEKLKIQVGPKTAPLMDDVLDYDKVMDSLDHFMDWLAVQYISALNIIHYMHDKYSYEASLMALHDRDVYRTMACGIAGLSVATDSLSAIKYARVKPIRDENGLAVDFEIDGEYPQYGNNDERVDSIACDLVERFMKKIKALPTYRNAVPTQSILTITSNVVYGQKTGNTPDGRRAGTPFAPGANPMHGRDRKGAVASLTSVAKLPFTYAKDGISYTFSIVPAALGKEDPVRKTNLVGLLDGYFHHEADVEGGQHLNVNVMNREMLLDAIEHPEKYPNLTIRVSGYAVRFNALTREQQQDVISRTFTQAL</sequence>
<comment type="function">
    <text evidence="5">Catalyzes the cleavage of 2-ketobutyrate to propionyl-CoA and formate. It can also use pyruvate as substrate.</text>
</comment>
<comment type="catalytic activity">
    <reaction evidence="5">
        <text>2-oxobutanoate + CoA = propanoyl-CoA + formate</text>
        <dbReference type="Rhea" id="RHEA:28054"/>
        <dbReference type="ChEBI" id="CHEBI:15740"/>
        <dbReference type="ChEBI" id="CHEBI:16763"/>
        <dbReference type="ChEBI" id="CHEBI:57287"/>
        <dbReference type="ChEBI" id="CHEBI:57392"/>
    </reaction>
    <physiologicalReaction direction="left-to-right" evidence="5">
        <dbReference type="Rhea" id="RHEA:28055"/>
    </physiologicalReaction>
</comment>
<comment type="catalytic activity">
    <reaction evidence="5">
        <text>formate + acetyl-CoA = pyruvate + CoA</text>
        <dbReference type="Rhea" id="RHEA:11844"/>
        <dbReference type="ChEBI" id="CHEBI:15361"/>
        <dbReference type="ChEBI" id="CHEBI:15740"/>
        <dbReference type="ChEBI" id="CHEBI:57287"/>
        <dbReference type="ChEBI" id="CHEBI:57288"/>
        <dbReference type="EC" id="2.3.1.54"/>
    </reaction>
    <physiologicalReaction direction="right-to-left" evidence="5">
        <dbReference type="Rhea" id="RHEA:11846"/>
    </physiologicalReaction>
</comment>
<comment type="activity regulation">
    <text evidence="5">Dependent on PFL-activase.</text>
</comment>
<comment type="pathway">
    <text>Amino-acid degradation; L-threonine degradation via propanoate pathway; propanoate from L-threonine: step 2/4.</text>
</comment>
<comment type="subcellular location">
    <subcellularLocation>
        <location evidence="1">Cytoplasm</location>
    </subcellularLocation>
</comment>
<comment type="induction">
    <text evidence="5">Strongly repressed by glucose. Anaerobic growth of the pfl mutant in the presence of cAMP and L-threonine induced synthesis of TdcE.</text>
</comment>
<comment type="disruption phenotype">
    <text evidence="5">No discernible phenotype.</text>
</comment>
<comment type="similarity">
    <text evidence="6">Belongs to the glycyl radical enzyme (GRE) family. PFL subfamily.</text>
</comment>
<comment type="sequence caution" evidence="6">
    <conflict type="frameshift">
        <sequence resource="EMBL-CDS" id="AAA57918"/>
    </conflict>
</comment>